<organism>
    <name type="scientific">Dictyostelium discoideum</name>
    <name type="common">Social amoeba</name>
    <dbReference type="NCBI Taxonomy" id="44689"/>
    <lineage>
        <taxon>Eukaryota</taxon>
        <taxon>Amoebozoa</taxon>
        <taxon>Evosea</taxon>
        <taxon>Eumycetozoa</taxon>
        <taxon>Dictyostelia</taxon>
        <taxon>Dictyosteliales</taxon>
        <taxon>Dictyosteliaceae</taxon>
        <taxon>Dictyostelium</taxon>
    </lineage>
</organism>
<evidence type="ECO:0000255" key="1"/>
<evidence type="ECO:0000256" key="2">
    <source>
        <dbReference type="SAM" id="MobiDB-lite"/>
    </source>
</evidence>
<evidence type="ECO:0000305" key="3"/>
<comment type="subcellular location">
    <subcellularLocation>
        <location evidence="3">Membrane</location>
        <topology evidence="3">Multi-pass membrane protein</topology>
    </subcellularLocation>
</comment>
<dbReference type="EMBL" id="AAFI02000177">
    <property type="protein sequence ID" value="EAL61784.1"/>
    <property type="molecule type" value="Genomic_DNA"/>
</dbReference>
<dbReference type="RefSeq" id="XP_635326.1">
    <property type="nucleotide sequence ID" value="XM_630234.1"/>
</dbReference>
<dbReference type="FunCoup" id="Q54EB4">
    <property type="interactions" value="542"/>
</dbReference>
<dbReference type="GlyGen" id="Q54EB4">
    <property type="glycosylation" value="1 site"/>
</dbReference>
<dbReference type="PaxDb" id="44689-DDB0184006"/>
<dbReference type="EnsemblProtists" id="EAL61784">
    <property type="protein sequence ID" value="EAL61784"/>
    <property type="gene ID" value="DDB_G0291600"/>
</dbReference>
<dbReference type="GeneID" id="8628271"/>
<dbReference type="KEGG" id="ddi:DDB_G0291600"/>
<dbReference type="dictyBase" id="DDB_G0291600">
    <property type="gene designation" value="ldpA"/>
</dbReference>
<dbReference type="VEuPathDB" id="AmoebaDB:DDB_G0291600"/>
<dbReference type="eggNOG" id="ENOG502RE6J">
    <property type="taxonomic scope" value="Eukaryota"/>
</dbReference>
<dbReference type="HOGENOM" id="CLU_777129_0_0_1"/>
<dbReference type="InParanoid" id="Q54EB4"/>
<dbReference type="OMA" id="VIFKVFW"/>
<dbReference type="PRO" id="PR:Q54EB4"/>
<dbReference type="Proteomes" id="UP000002195">
    <property type="component" value="Chromosome 6"/>
</dbReference>
<dbReference type="GO" id="GO:0005783">
    <property type="term" value="C:endoplasmic reticulum"/>
    <property type="evidence" value="ECO:0000314"/>
    <property type="project" value="dictyBase"/>
</dbReference>
<dbReference type="GO" id="GO:0005811">
    <property type="term" value="C:lipid droplet"/>
    <property type="evidence" value="ECO:0000314"/>
    <property type="project" value="dictyBase"/>
</dbReference>
<dbReference type="GO" id="GO:0016020">
    <property type="term" value="C:membrane"/>
    <property type="evidence" value="ECO:0007669"/>
    <property type="project" value="UniProtKB-SubCell"/>
</dbReference>
<dbReference type="PANTHER" id="PTHR16148:SF14">
    <property type="entry name" value="MYND-TYPE DOMAIN-CONTAINING PROTEIN"/>
    <property type="match status" value="1"/>
</dbReference>
<dbReference type="PANTHER" id="PTHR16148">
    <property type="entry name" value="NF-KAPPA-B-REPRESSING FACTOR-RELATED"/>
    <property type="match status" value="1"/>
</dbReference>
<keyword id="KW-0175">Coiled coil</keyword>
<keyword id="KW-0472">Membrane</keyword>
<keyword id="KW-1185">Reference proteome</keyword>
<keyword id="KW-0812">Transmembrane</keyword>
<keyword id="KW-1133">Transmembrane helix</keyword>
<gene>
    <name type="ORF">DDB_G0291600</name>
</gene>
<sequence>MNTSTTTKSKNKPPKSTPSTFIKIIEFWFYLIQILTVLFSWRVYFLFIDSKKKIENNNNNDNDNNNTNKNDEKRYLTFKEKVQHNFFCLFTDTLYFMMLIITCTLFFWRLKDTLSLLKKSDSSKYKQIIWDQFSGGFVEFGSFTVLLLLKWPVIFKVFWNKGTEKEDKSTWSQIFMREFSQEVDKNKLGGPKPPTTNTTNFSGNGSSSSTTNATSSSSSQANNKRAMSDDEWRHAFRRDLQNIGFEFDSQTGDVSKFPPTEVMEQYQKSAEFRDLILASGSLKAGSEQQDKNKNNNNNNNNNGPKIEEYDNQKQEEEENEEKETNKQQTQKDDEKETSTTTTSSNKKSKKGKKNKRN</sequence>
<name>Y4006_DICDI</name>
<accession>Q54EB4</accession>
<proteinExistence type="predicted"/>
<feature type="chain" id="PRO_0000346876" description="Putative uncharacterized transmembrane protein DDB_G0291600">
    <location>
        <begin position="1"/>
        <end position="357"/>
    </location>
</feature>
<feature type="transmembrane region" description="Helical" evidence="1">
    <location>
        <begin position="21"/>
        <end position="41"/>
    </location>
</feature>
<feature type="transmembrane region" description="Helical" evidence="1">
    <location>
        <begin position="86"/>
        <end position="106"/>
    </location>
</feature>
<feature type="transmembrane region" description="Helical" evidence="1">
    <location>
        <begin position="135"/>
        <end position="155"/>
    </location>
</feature>
<feature type="region of interest" description="Disordered" evidence="2">
    <location>
        <begin position="184"/>
        <end position="229"/>
    </location>
</feature>
<feature type="region of interest" description="Disordered" evidence="2">
    <location>
        <begin position="283"/>
        <end position="357"/>
    </location>
</feature>
<feature type="coiled-coil region" evidence="1">
    <location>
        <begin position="305"/>
        <end position="337"/>
    </location>
</feature>
<feature type="compositionally biased region" description="Low complexity" evidence="2">
    <location>
        <begin position="195"/>
        <end position="223"/>
    </location>
</feature>
<feature type="compositionally biased region" description="Basic and acidic residues" evidence="2">
    <location>
        <begin position="305"/>
        <end position="314"/>
    </location>
</feature>
<feature type="compositionally biased region" description="Basic and acidic residues" evidence="2">
    <location>
        <begin position="322"/>
        <end position="337"/>
    </location>
</feature>
<feature type="compositionally biased region" description="Basic residues" evidence="2">
    <location>
        <begin position="346"/>
        <end position="357"/>
    </location>
</feature>
<reference key="1">
    <citation type="journal article" date="2005" name="Nature">
        <title>The genome of the social amoeba Dictyostelium discoideum.</title>
        <authorList>
            <person name="Eichinger L."/>
            <person name="Pachebat J.A."/>
            <person name="Gloeckner G."/>
            <person name="Rajandream M.A."/>
            <person name="Sucgang R."/>
            <person name="Berriman M."/>
            <person name="Song J."/>
            <person name="Olsen R."/>
            <person name="Szafranski K."/>
            <person name="Xu Q."/>
            <person name="Tunggal B."/>
            <person name="Kummerfeld S."/>
            <person name="Madera M."/>
            <person name="Konfortov B.A."/>
            <person name="Rivero F."/>
            <person name="Bankier A.T."/>
            <person name="Lehmann R."/>
            <person name="Hamlin N."/>
            <person name="Davies R."/>
            <person name="Gaudet P."/>
            <person name="Fey P."/>
            <person name="Pilcher K."/>
            <person name="Chen G."/>
            <person name="Saunders D."/>
            <person name="Sodergren E.J."/>
            <person name="Davis P."/>
            <person name="Kerhornou A."/>
            <person name="Nie X."/>
            <person name="Hall N."/>
            <person name="Anjard C."/>
            <person name="Hemphill L."/>
            <person name="Bason N."/>
            <person name="Farbrother P."/>
            <person name="Desany B."/>
            <person name="Just E."/>
            <person name="Morio T."/>
            <person name="Rost R."/>
            <person name="Churcher C.M."/>
            <person name="Cooper J."/>
            <person name="Haydock S."/>
            <person name="van Driessche N."/>
            <person name="Cronin A."/>
            <person name="Goodhead I."/>
            <person name="Muzny D.M."/>
            <person name="Mourier T."/>
            <person name="Pain A."/>
            <person name="Lu M."/>
            <person name="Harper D."/>
            <person name="Lindsay R."/>
            <person name="Hauser H."/>
            <person name="James K.D."/>
            <person name="Quiles M."/>
            <person name="Madan Babu M."/>
            <person name="Saito T."/>
            <person name="Buchrieser C."/>
            <person name="Wardroper A."/>
            <person name="Felder M."/>
            <person name="Thangavelu M."/>
            <person name="Johnson D."/>
            <person name="Knights A."/>
            <person name="Loulseged H."/>
            <person name="Mungall K.L."/>
            <person name="Oliver K."/>
            <person name="Price C."/>
            <person name="Quail M.A."/>
            <person name="Urushihara H."/>
            <person name="Hernandez J."/>
            <person name="Rabbinowitsch E."/>
            <person name="Steffen D."/>
            <person name="Sanders M."/>
            <person name="Ma J."/>
            <person name="Kohara Y."/>
            <person name="Sharp S."/>
            <person name="Simmonds M.N."/>
            <person name="Spiegler S."/>
            <person name="Tivey A."/>
            <person name="Sugano S."/>
            <person name="White B."/>
            <person name="Walker D."/>
            <person name="Woodward J.R."/>
            <person name="Winckler T."/>
            <person name="Tanaka Y."/>
            <person name="Shaulsky G."/>
            <person name="Schleicher M."/>
            <person name="Weinstock G.M."/>
            <person name="Rosenthal A."/>
            <person name="Cox E.C."/>
            <person name="Chisholm R.L."/>
            <person name="Gibbs R.A."/>
            <person name="Loomis W.F."/>
            <person name="Platzer M."/>
            <person name="Kay R.R."/>
            <person name="Williams J.G."/>
            <person name="Dear P.H."/>
            <person name="Noegel A.A."/>
            <person name="Barrell B.G."/>
            <person name="Kuspa A."/>
        </authorList>
    </citation>
    <scope>NUCLEOTIDE SEQUENCE [LARGE SCALE GENOMIC DNA]</scope>
    <source>
        <strain>AX4</strain>
    </source>
</reference>
<protein>
    <recommendedName>
        <fullName>Putative uncharacterized transmembrane protein DDB_G0291600</fullName>
    </recommendedName>
</protein>